<dbReference type="EMBL" id="AL009126">
    <property type="protein sequence ID" value="CAB15165.1"/>
    <property type="molecule type" value="Genomic_DNA"/>
</dbReference>
<dbReference type="PIR" id="B70008">
    <property type="entry name" value="B70008"/>
</dbReference>
<dbReference type="RefSeq" id="NP_391055.1">
    <property type="nucleotide sequence ID" value="NC_000964.3"/>
</dbReference>
<dbReference type="RefSeq" id="WP_003242987.1">
    <property type="nucleotide sequence ID" value="NZ_OZ025638.1"/>
</dbReference>
<dbReference type="PDB" id="2OHW">
    <property type="method" value="X-ray"/>
    <property type="resolution" value="1.40 A"/>
    <property type="chains" value="A/B=2-132"/>
</dbReference>
<dbReference type="PDBsum" id="2OHW"/>
<dbReference type="SMR" id="O32092"/>
<dbReference type="FunCoup" id="O32092">
    <property type="interactions" value="53"/>
</dbReference>
<dbReference type="STRING" id="224308.BSU31770"/>
<dbReference type="PaxDb" id="224308-BSU31770"/>
<dbReference type="DNASU" id="938125"/>
<dbReference type="EnsemblBacteria" id="CAB15165">
    <property type="protein sequence ID" value="CAB15165"/>
    <property type="gene ID" value="BSU_31770"/>
</dbReference>
<dbReference type="GeneID" id="938125"/>
<dbReference type="KEGG" id="bsu:BSU31770"/>
<dbReference type="PATRIC" id="fig|224308.179.peg.3443"/>
<dbReference type="eggNOG" id="COG5506">
    <property type="taxonomic scope" value="Bacteria"/>
</dbReference>
<dbReference type="InParanoid" id="O32092"/>
<dbReference type="OrthoDB" id="95278at2"/>
<dbReference type="PhylomeDB" id="O32092"/>
<dbReference type="BioCyc" id="BSUB:BSU31770-MONOMER"/>
<dbReference type="EvolutionaryTrace" id="O32092"/>
<dbReference type="Proteomes" id="UP000001570">
    <property type="component" value="Chromosome"/>
</dbReference>
<dbReference type="Gene3D" id="3.30.1330.30">
    <property type="match status" value="1"/>
</dbReference>
<dbReference type="InterPro" id="IPR012543">
    <property type="entry name" value="DUF1694"/>
</dbReference>
<dbReference type="InterPro" id="IPR029064">
    <property type="entry name" value="Ribosomal_eL30-like_sf"/>
</dbReference>
<dbReference type="Pfam" id="PF07997">
    <property type="entry name" value="DUF1694"/>
    <property type="match status" value="1"/>
</dbReference>
<dbReference type="PIRSF" id="PIRSF034303">
    <property type="entry name" value="DUF1694"/>
    <property type="match status" value="1"/>
</dbReference>
<dbReference type="SUPFAM" id="SSF160515">
    <property type="entry name" value="YueI-like"/>
    <property type="match status" value="1"/>
</dbReference>
<name>YUEI_BACSU</name>
<sequence>MSEDKMDLYLQQGMYGPLETKPDERHLFLGSLRERVVLALTKGQVLRSKPYKEAEHELKNSHNVTLLINGELQYQSYSSYIQMASRYGVPFKIVSDLQFHTPLGIVIAADIAVNRELIYIQDDIYNRSVLKS</sequence>
<evidence type="ECO:0007829" key="1">
    <source>
        <dbReference type="PDB" id="2OHW"/>
    </source>
</evidence>
<gene>
    <name type="primary">yueI</name>
    <name type="ordered locus">BSU31770</name>
</gene>
<keyword id="KW-0002">3D-structure</keyword>
<keyword id="KW-1185">Reference proteome</keyword>
<organism>
    <name type="scientific">Bacillus subtilis (strain 168)</name>
    <dbReference type="NCBI Taxonomy" id="224308"/>
    <lineage>
        <taxon>Bacteria</taxon>
        <taxon>Bacillati</taxon>
        <taxon>Bacillota</taxon>
        <taxon>Bacilli</taxon>
        <taxon>Bacillales</taxon>
        <taxon>Bacillaceae</taxon>
        <taxon>Bacillus</taxon>
    </lineage>
</organism>
<reference key="1">
    <citation type="journal article" date="1997" name="Nature">
        <title>The complete genome sequence of the Gram-positive bacterium Bacillus subtilis.</title>
        <authorList>
            <person name="Kunst F."/>
            <person name="Ogasawara N."/>
            <person name="Moszer I."/>
            <person name="Albertini A.M."/>
            <person name="Alloni G."/>
            <person name="Azevedo V."/>
            <person name="Bertero M.G."/>
            <person name="Bessieres P."/>
            <person name="Bolotin A."/>
            <person name="Borchert S."/>
            <person name="Borriss R."/>
            <person name="Boursier L."/>
            <person name="Brans A."/>
            <person name="Braun M."/>
            <person name="Brignell S.C."/>
            <person name="Bron S."/>
            <person name="Brouillet S."/>
            <person name="Bruschi C.V."/>
            <person name="Caldwell B."/>
            <person name="Capuano V."/>
            <person name="Carter N.M."/>
            <person name="Choi S.-K."/>
            <person name="Codani J.-J."/>
            <person name="Connerton I.F."/>
            <person name="Cummings N.J."/>
            <person name="Daniel R.A."/>
            <person name="Denizot F."/>
            <person name="Devine K.M."/>
            <person name="Duesterhoeft A."/>
            <person name="Ehrlich S.D."/>
            <person name="Emmerson P.T."/>
            <person name="Entian K.-D."/>
            <person name="Errington J."/>
            <person name="Fabret C."/>
            <person name="Ferrari E."/>
            <person name="Foulger D."/>
            <person name="Fritz C."/>
            <person name="Fujita M."/>
            <person name="Fujita Y."/>
            <person name="Fuma S."/>
            <person name="Galizzi A."/>
            <person name="Galleron N."/>
            <person name="Ghim S.-Y."/>
            <person name="Glaser P."/>
            <person name="Goffeau A."/>
            <person name="Golightly E.J."/>
            <person name="Grandi G."/>
            <person name="Guiseppi G."/>
            <person name="Guy B.J."/>
            <person name="Haga K."/>
            <person name="Haiech J."/>
            <person name="Harwood C.R."/>
            <person name="Henaut A."/>
            <person name="Hilbert H."/>
            <person name="Holsappel S."/>
            <person name="Hosono S."/>
            <person name="Hullo M.-F."/>
            <person name="Itaya M."/>
            <person name="Jones L.-M."/>
            <person name="Joris B."/>
            <person name="Karamata D."/>
            <person name="Kasahara Y."/>
            <person name="Klaerr-Blanchard M."/>
            <person name="Klein C."/>
            <person name="Kobayashi Y."/>
            <person name="Koetter P."/>
            <person name="Koningstein G."/>
            <person name="Krogh S."/>
            <person name="Kumano M."/>
            <person name="Kurita K."/>
            <person name="Lapidus A."/>
            <person name="Lardinois S."/>
            <person name="Lauber J."/>
            <person name="Lazarevic V."/>
            <person name="Lee S.-M."/>
            <person name="Levine A."/>
            <person name="Liu H."/>
            <person name="Masuda S."/>
            <person name="Mauel C."/>
            <person name="Medigue C."/>
            <person name="Medina N."/>
            <person name="Mellado R.P."/>
            <person name="Mizuno M."/>
            <person name="Moestl D."/>
            <person name="Nakai S."/>
            <person name="Noback M."/>
            <person name="Noone D."/>
            <person name="O'Reilly M."/>
            <person name="Ogawa K."/>
            <person name="Ogiwara A."/>
            <person name="Oudega B."/>
            <person name="Park S.-H."/>
            <person name="Parro V."/>
            <person name="Pohl T.M."/>
            <person name="Portetelle D."/>
            <person name="Porwollik S."/>
            <person name="Prescott A.M."/>
            <person name="Presecan E."/>
            <person name="Pujic P."/>
            <person name="Purnelle B."/>
            <person name="Rapoport G."/>
            <person name="Rey M."/>
            <person name="Reynolds S."/>
            <person name="Rieger M."/>
            <person name="Rivolta C."/>
            <person name="Rocha E."/>
            <person name="Roche B."/>
            <person name="Rose M."/>
            <person name="Sadaie Y."/>
            <person name="Sato T."/>
            <person name="Scanlan E."/>
            <person name="Schleich S."/>
            <person name="Schroeter R."/>
            <person name="Scoffone F."/>
            <person name="Sekiguchi J."/>
            <person name="Sekowska A."/>
            <person name="Seror S.J."/>
            <person name="Serror P."/>
            <person name="Shin B.-S."/>
            <person name="Soldo B."/>
            <person name="Sorokin A."/>
            <person name="Tacconi E."/>
            <person name="Takagi T."/>
            <person name="Takahashi H."/>
            <person name="Takemaru K."/>
            <person name="Takeuchi M."/>
            <person name="Tamakoshi A."/>
            <person name="Tanaka T."/>
            <person name="Terpstra P."/>
            <person name="Tognoni A."/>
            <person name="Tosato V."/>
            <person name="Uchiyama S."/>
            <person name="Vandenbol M."/>
            <person name="Vannier F."/>
            <person name="Vassarotti A."/>
            <person name="Viari A."/>
            <person name="Wambutt R."/>
            <person name="Wedler E."/>
            <person name="Wedler H."/>
            <person name="Weitzenegger T."/>
            <person name="Winters P."/>
            <person name="Wipat A."/>
            <person name="Yamamoto H."/>
            <person name="Yamane K."/>
            <person name="Yasumoto K."/>
            <person name="Yata K."/>
            <person name="Yoshida K."/>
            <person name="Yoshikawa H.-F."/>
            <person name="Zumstein E."/>
            <person name="Yoshikawa H."/>
            <person name="Danchin A."/>
        </authorList>
    </citation>
    <scope>NUCLEOTIDE SEQUENCE [LARGE SCALE GENOMIC DNA]</scope>
    <source>
        <strain>168</strain>
    </source>
</reference>
<reference key="2">
    <citation type="submission" date="2007-01" db="PDB data bank">
        <title>Crystal structure of the yueI protein from Bacillus subtilis.</title>
        <authorList>
            <consortium name="New York structural genomix research consortium (NYSGXRC)"/>
        </authorList>
    </citation>
    <scope>X-RAY CRYSTALLOGRAPHY (1.4 ANGSTROMS)</scope>
</reference>
<protein>
    <recommendedName>
        <fullName>Uncharacterized protein YueI</fullName>
    </recommendedName>
</protein>
<accession>O32092</accession>
<feature type="chain" id="PRO_0000359925" description="Uncharacterized protein YueI">
    <location>
        <begin position="1"/>
        <end position="132"/>
    </location>
</feature>
<feature type="helix" evidence="1">
    <location>
        <begin position="4"/>
        <end position="11"/>
    </location>
</feature>
<feature type="helix" evidence="1">
    <location>
        <begin position="21"/>
        <end position="27"/>
    </location>
</feature>
<feature type="turn" evidence="1">
    <location>
        <begin position="28"/>
        <end position="30"/>
    </location>
</feature>
<feature type="helix" evidence="1">
    <location>
        <begin position="33"/>
        <end position="35"/>
    </location>
</feature>
<feature type="strand" evidence="1">
    <location>
        <begin position="36"/>
        <end position="41"/>
    </location>
</feature>
<feature type="helix" evidence="1">
    <location>
        <begin position="42"/>
        <end position="45"/>
    </location>
</feature>
<feature type="strand" evidence="1">
    <location>
        <begin position="47"/>
        <end position="49"/>
    </location>
</feature>
<feature type="helix" evidence="1">
    <location>
        <begin position="52"/>
        <end position="59"/>
    </location>
</feature>
<feature type="strand" evidence="1">
    <location>
        <begin position="62"/>
        <end position="69"/>
    </location>
</feature>
<feature type="helix" evidence="1">
    <location>
        <begin position="74"/>
        <end position="86"/>
    </location>
</feature>
<feature type="strand" evidence="1">
    <location>
        <begin position="91"/>
        <end position="94"/>
    </location>
</feature>
<feature type="strand" evidence="1">
    <location>
        <begin position="102"/>
        <end position="111"/>
    </location>
</feature>
<feature type="helix" evidence="1">
    <location>
        <begin position="123"/>
        <end position="128"/>
    </location>
</feature>
<proteinExistence type="evidence at protein level"/>